<organism>
    <name type="scientific">Stercorarius maccormicki</name>
    <name type="common">South polar skua</name>
    <name type="synonym">Catharacta maccormicki</name>
    <dbReference type="NCBI Taxonomy" id="395889"/>
    <lineage>
        <taxon>Eukaryota</taxon>
        <taxon>Metazoa</taxon>
        <taxon>Chordata</taxon>
        <taxon>Craniata</taxon>
        <taxon>Vertebrata</taxon>
        <taxon>Euteleostomi</taxon>
        <taxon>Archelosauria</taxon>
        <taxon>Archosauria</taxon>
        <taxon>Dinosauria</taxon>
        <taxon>Saurischia</taxon>
        <taxon>Theropoda</taxon>
        <taxon>Coelurosauria</taxon>
        <taxon>Aves</taxon>
        <taxon>Neognathae</taxon>
        <taxon>Neoaves</taxon>
        <taxon>Charadriiformes</taxon>
        <taxon>Stercorariidae</taxon>
        <taxon>Stercorarius</taxon>
    </lineage>
</organism>
<evidence type="ECO:0000255" key="1">
    <source>
        <dbReference type="PROSITE-ProRule" id="PRU00238"/>
    </source>
</evidence>
<keyword id="KW-0903">Direct protein sequencing</keyword>
<keyword id="KW-0349">Heme</keyword>
<keyword id="KW-0408">Iron</keyword>
<keyword id="KW-0479">Metal-binding</keyword>
<keyword id="KW-0561">Oxygen transport</keyword>
<keyword id="KW-0813">Transport</keyword>
<name>HBB_STEMC</name>
<sequence length="146" mass="16305">VHWSAEEKQLITGLWGKVNVADCGAEALARLLIVYPWTQRFFSSFGNLSSPTAIIGNPMVRAHGKKVLTSFGEAVKNLDNIKNTFAQLSELHCDKLHVDPENFRLLGDILIIVLAAHFAKEFTPDCQAAWQKLVRVVAHALARKYH</sequence>
<reference key="1">
    <citation type="journal article" date="2000" name="Eur. J. Biochem.">
        <title>Structural and functional analysis of the two haemoglobins of the antarctic seabird Catharacta maccormicki. Characterization of an additional phosphate binding site by molecular modelling.</title>
        <authorList>
            <person name="Tamburrini M."/>
            <person name="Riccio A."/>
            <person name="Romano M."/>
            <person name="Giardina B."/>
            <person name="di Prisco G."/>
        </authorList>
    </citation>
    <scope>PROTEIN SEQUENCE</scope>
    <source>
        <tissue>Blood</tissue>
    </source>
</reference>
<dbReference type="SMR" id="P82113"/>
<dbReference type="GO" id="GO:0072562">
    <property type="term" value="C:blood microparticle"/>
    <property type="evidence" value="ECO:0007669"/>
    <property type="project" value="TreeGrafter"/>
</dbReference>
<dbReference type="GO" id="GO:0031838">
    <property type="term" value="C:haptoglobin-hemoglobin complex"/>
    <property type="evidence" value="ECO:0007669"/>
    <property type="project" value="TreeGrafter"/>
</dbReference>
<dbReference type="GO" id="GO:0005833">
    <property type="term" value="C:hemoglobin complex"/>
    <property type="evidence" value="ECO:0007669"/>
    <property type="project" value="InterPro"/>
</dbReference>
<dbReference type="GO" id="GO:0031720">
    <property type="term" value="F:haptoglobin binding"/>
    <property type="evidence" value="ECO:0007669"/>
    <property type="project" value="TreeGrafter"/>
</dbReference>
<dbReference type="GO" id="GO:0020037">
    <property type="term" value="F:heme binding"/>
    <property type="evidence" value="ECO:0007669"/>
    <property type="project" value="InterPro"/>
</dbReference>
<dbReference type="GO" id="GO:0046872">
    <property type="term" value="F:metal ion binding"/>
    <property type="evidence" value="ECO:0007669"/>
    <property type="project" value="UniProtKB-KW"/>
</dbReference>
<dbReference type="GO" id="GO:0043177">
    <property type="term" value="F:organic acid binding"/>
    <property type="evidence" value="ECO:0007669"/>
    <property type="project" value="TreeGrafter"/>
</dbReference>
<dbReference type="GO" id="GO:0019825">
    <property type="term" value="F:oxygen binding"/>
    <property type="evidence" value="ECO:0007669"/>
    <property type="project" value="InterPro"/>
</dbReference>
<dbReference type="GO" id="GO:0005344">
    <property type="term" value="F:oxygen carrier activity"/>
    <property type="evidence" value="ECO:0007669"/>
    <property type="project" value="UniProtKB-KW"/>
</dbReference>
<dbReference type="GO" id="GO:0004601">
    <property type="term" value="F:peroxidase activity"/>
    <property type="evidence" value="ECO:0007669"/>
    <property type="project" value="TreeGrafter"/>
</dbReference>
<dbReference type="GO" id="GO:0042744">
    <property type="term" value="P:hydrogen peroxide catabolic process"/>
    <property type="evidence" value="ECO:0007669"/>
    <property type="project" value="TreeGrafter"/>
</dbReference>
<dbReference type="CDD" id="cd08925">
    <property type="entry name" value="Hb-beta-like"/>
    <property type="match status" value="1"/>
</dbReference>
<dbReference type="FunFam" id="1.10.490.10:FF:000001">
    <property type="entry name" value="Hemoglobin subunit beta"/>
    <property type="match status" value="1"/>
</dbReference>
<dbReference type="Gene3D" id="1.10.490.10">
    <property type="entry name" value="Globins"/>
    <property type="match status" value="1"/>
</dbReference>
<dbReference type="InterPro" id="IPR000971">
    <property type="entry name" value="Globin"/>
</dbReference>
<dbReference type="InterPro" id="IPR009050">
    <property type="entry name" value="Globin-like_sf"/>
</dbReference>
<dbReference type="InterPro" id="IPR012292">
    <property type="entry name" value="Globin/Proto"/>
</dbReference>
<dbReference type="InterPro" id="IPR002337">
    <property type="entry name" value="Hemoglobin_b"/>
</dbReference>
<dbReference type="InterPro" id="IPR050056">
    <property type="entry name" value="Hemoglobin_oxygen_transport"/>
</dbReference>
<dbReference type="PANTHER" id="PTHR11442">
    <property type="entry name" value="HEMOGLOBIN FAMILY MEMBER"/>
    <property type="match status" value="1"/>
</dbReference>
<dbReference type="PANTHER" id="PTHR11442:SF7">
    <property type="entry name" value="HEMOGLOBIN SUBUNIT EPSILON"/>
    <property type="match status" value="1"/>
</dbReference>
<dbReference type="Pfam" id="PF00042">
    <property type="entry name" value="Globin"/>
    <property type="match status" value="1"/>
</dbReference>
<dbReference type="PRINTS" id="PR00814">
    <property type="entry name" value="BETAHAEM"/>
</dbReference>
<dbReference type="SUPFAM" id="SSF46458">
    <property type="entry name" value="Globin-like"/>
    <property type="match status" value="1"/>
</dbReference>
<dbReference type="PROSITE" id="PS01033">
    <property type="entry name" value="GLOBIN"/>
    <property type="match status" value="1"/>
</dbReference>
<proteinExistence type="evidence at protein level"/>
<gene>
    <name type="primary">HBB</name>
</gene>
<comment type="function">
    <text>Involved in oxygen transport from the lung to the various peripheral tissues.</text>
</comment>
<comment type="subunit">
    <text>Heterotetramer of two alpha chains and two beta chains.</text>
</comment>
<comment type="tissue specificity">
    <text>Red blood cells.</text>
</comment>
<comment type="similarity">
    <text evidence="1">Belongs to the globin family.</text>
</comment>
<feature type="chain" id="PRO_0000052914" description="Hemoglobin subunit beta">
    <location>
        <begin position="1"/>
        <end position="146"/>
    </location>
</feature>
<feature type="domain" description="Globin" evidence="1">
    <location>
        <begin position="2"/>
        <end position="146"/>
    </location>
</feature>
<feature type="binding site" description="distal binding residue">
    <location>
        <position position="63"/>
    </location>
    <ligand>
        <name>heme b</name>
        <dbReference type="ChEBI" id="CHEBI:60344"/>
    </ligand>
    <ligandPart>
        <name>Fe</name>
        <dbReference type="ChEBI" id="CHEBI:18248"/>
    </ligandPart>
</feature>
<feature type="binding site" description="proximal binding residue">
    <location>
        <position position="92"/>
    </location>
    <ligand>
        <name>heme b</name>
        <dbReference type="ChEBI" id="CHEBI:60344"/>
    </ligand>
    <ligandPart>
        <name>Fe</name>
        <dbReference type="ChEBI" id="CHEBI:18248"/>
    </ligandPart>
</feature>
<protein>
    <recommendedName>
        <fullName>Hemoglobin subunit beta</fullName>
    </recommendedName>
    <alternativeName>
        <fullName>Beta-globin</fullName>
    </alternativeName>
    <alternativeName>
        <fullName>Hemoglobin beta chain</fullName>
    </alternativeName>
</protein>
<accession>P82113</accession>